<gene>
    <name type="primary">Sftpa1</name>
    <name type="synonym">Sftp-1</name>
    <name type="synonym">Sftp1</name>
    <name type="synonym">Sftpa</name>
</gene>
<protein>
    <recommendedName>
        <fullName>Pulmonary surfactant-associated protein A</fullName>
        <shortName>PSAP</shortName>
        <shortName>PSP-A</shortName>
        <shortName>SP-A</shortName>
    </recommendedName>
</protein>
<proteinExistence type="evidence at protein level"/>
<sequence length="248" mass="26289">MSLCSLAFTLFLTVVAGIKCNVTDVCAGSPGIPGAPGNHGLPGRDGRDGVKGDPGPPGPMGPPGGMPGLPGRDGLPGAPGAPGERGDKGEPGERGLPGFPAYLDEELQTELYEIKHQILQTMGVLSLQGSMLSVGDKVFSTNGQSVNFDTIKEMCTRAGGNIAVPRTPEENEAIASIAKKYNNYVYLGMIEDQTPGDFHYLDGASVNYTNWYPGEPRGQGKEKCVEMYTDGTWNDRGCLQYRLAVCEF</sequence>
<accession>P08427</accession>
<feature type="signal peptide">
    <location>
        <begin position="1"/>
        <end position="20"/>
    </location>
</feature>
<feature type="chain" id="PRO_0000017462" description="Pulmonary surfactant-associated protein A">
    <location>
        <begin position="21"/>
        <end position="248"/>
    </location>
</feature>
<feature type="domain" description="Collagen-like">
    <location>
        <begin position="28"/>
        <end position="100"/>
    </location>
</feature>
<feature type="domain" description="C-type lectin" evidence="3">
    <location>
        <begin position="133"/>
        <end position="248"/>
    </location>
</feature>
<feature type="region of interest" description="Disordered" evidence="4">
    <location>
        <begin position="31"/>
        <end position="99"/>
    </location>
</feature>
<feature type="compositionally biased region" description="Basic and acidic residues" evidence="4">
    <location>
        <begin position="42"/>
        <end position="51"/>
    </location>
</feature>
<feature type="compositionally biased region" description="Pro residues" evidence="4">
    <location>
        <begin position="54"/>
        <end position="65"/>
    </location>
</feature>
<feature type="compositionally biased region" description="Low complexity" evidence="4">
    <location>
        <begin position="69"/>
        <end position="82"/>
    </location>
</feature>
<feature type="compositionally biased region" description="Basic and acidic residues" evidence="4">
    <location>
        <begin position="84"/>
        <end position="93"/>
    </location>
</feature>
<feature type="binding site">
    <location>
        <position position="215"/>
    </location>
    <ligand>
        <name>Ca(2+)</name>
        <dbReference type="ChEBI" id="CHEBI:29108"/>
    </ligand>
</feature>
<feature type="binding site">
    <location>
        <position position="217"/>
    </location>
    <ligand>
        <name>Ca(2+)</name>
        <dbReference type="ChEBI" id="CHEBI:29108"/>
    </ligand>
</feature>
<feature type="binding site">
    <location>
        <position position="234"/>
    </location>
    <ligand>
        <name>Ca(2+)</name>
        <dbReference type="ChEBI" id="CHEBI:29108"/>
    </ligand>
</feature>
<feature type="binding site">
    <location>
        <position position="235"/>
    </location>
    <ligand>
        <name>Ca(2+)</name>
        <dbReference type="ChEBI" id="CHEBI:29108"/>
    </ligand>
</feature>
<feature type="site" description="Not glycosylated">
    <location>
        <position position="21"/>
    </location>
</feature>
<feature type="modified residue" description="4-hydroxyproline" evidence="6">
    <location>
        <position position="30"/>
    </location>
</feature>
<feature type="modified residue" description="4-hydroxyproline" evidence="6">
    <location>
        <position position="33"/>
    </location>
</feature>
<feature type="modified residue" description="4-hydroxyproline" evidence="6">
    <location>
        <position position="36"/>
    </location>
</feature>
<feature type="modified residue" description="4-hydroxyproline" evidence="6">
    <location>
        <position position="42"/>
    </location>
</feature>
<feature type="modified residue" description="4-hydroxyproline" evidence="6">
    <location>
        <position position="54"/>
    </location>
</feature>
<feature type="modified residue" description="4-hydroxyproline" evidence="6">
    <location>
        <position position="57"/>
    </location>
</feature>
<feature type="modified residue" description="4-hydroxyproline" evidence="6">
    <location>
        <position position="63"/>
    </location>
</feature>
<feature type="modified residue" description="4-hydroxyproline" evidence="6">
    <location>
        <position position="67"/>
    </location>
</feature>
<feature type="modified residue" description="4-hydroxyproline" evidence="6">
    <location>
        <position position="70"/>
    </location>
</feature>
<feature type="modified residue" description="4-hydroxyproline" evidence="6">
    <location>
        <position position="76"/>
    </location>
</feature>
<feature type="glycosylation site" description="N-linked (GlcNAc...) asparagine" evidence="7">
    <location>
        <position position="207"/>
    </location>
</feature>
<feature type="disulfide bond" description="Interchain" evidence="3">
    <location>
        <position position="26"/>
    </location>
</feature>
<feature type="disulfide bond" evidence="3 5">
    <location>
        <begin position="155"/>
        <end position="246"/>
    </location>
</feature>
<feature type="disulfide bond" evidence="3 5">
    <location>
        <begin position="224"/>
        <end position="238"/>
    </location>
</feature>
<feature type="sequence conflict" description="In Ref. 1; AAA41973/CAA31573/CAA31574." evidence="7" ref="1">
    <original>A</original>
    <variation>G</variation>
    <location>
        <position position="78"/>
    </location>
</feature>
<feature type="sequence conflict" description="In Ref. 1; AAA41973/CAA31573/CAA31574." evidence="7" ref="1">
    <original>E</original>
    <variation>G</variation>
    <location>
        <position position="84"/>
    </location>
</feature>
<feature type="sequence conflict" description="In Ref. 2; AAA41972." evidence="7" ref="2">
    <location>
        <position position="139"/>
    </location>
</feature>
<feature type="sequence conflict" description="In Ref. 2; AAA41972." evidence="7" ref="2">
    <original>T</original>
    <variation>TF</variation>
    <location>
        <position position="156"/>
    </location>
</feature>
<feature type="sequence conflict" description="In Ref. 1; CAA31574." evidence="7" ref="1">
    <original>K</original>
    <variation>N</variation>
    <location>
        <position position="180"/>
    </location>
</feature>
<feature type="helix" evidence="11">
    <location>
        <begin position="109"/>
        <end position="127"/>
    </location>
</feature>
<feature type="strand" evidence="11">
    <location>
        <begin position="132"/>
        <end position="134"/>
    </location>
</feature>
<feature type="strand" evidence="11">
    <location>
        <begin position="137"/>
        <end position="146"/>
    </location>
</feature>
<feature type="helix" evidence="11">
    <location>
        <begin position="148"/>
        <end position="157"/>
    </location>
</feature>
<feature type="strand" evidence="10">
    <location>
        <begin position="160"/>
        <end position="162"/>
    </location>
</feature>
<feature type="helix" evidence="11">
    <location>
        <begin position="168"/>
        <end position="181"/>
    </location>
</feature>
<feature type="strand" evidence="11">
    <location>
        <begin position="188"/>
        <end position="190"/>
    </location>
</feature>
<feature type="strand" evidence="10">
    <location>
        <begin position="192"/>
        <end position="196"/>
    </location>
</feature>
<feature type="strand" evidence="9">
    <location>
        <begin position="198"/>
        <end position="200"/>
    </location>
</feature>
<feature type="strand" evidence="8">
    <location>
        <begin position="201"/>
        <end position="203"/>
    </location>
</feature>
<feature type="turn" evidence="11">
    <location>
        <begin position="219"/>
        <end position="221"/>
    </location>
</feature>
<feature type="strand" evidence="11">
    <location>
        <begin position="224"/>
        <end position="227"/>
    </location>
</feature>
<feature type="strand" evidence="11">
    <location>
        <begin position="233"/>
        <end position="236"/>
    </location>
</feature>
<feature type="strand" evidence="11">
    <location>
        <begin position="242"/>
        <end position="248"/>
    </location>
</feature>
<keyword id="KW-0002">3D-structure</keyword>
<keyword id="KW-0106">Calcium</keyword>
<keyword id="KW-0176">Collagen</keyword>
<keyword id="KW-0903">Direct protein sequencing</keyword>
<keyword id="KW-1015">Disulfide bond</keyword>
<keyword id="KW-0272">Extracellular matrix</keyword>
<keyword id="KW-0305">Gaseous exchange</keyword>
<keyword id="KW-0325">Glycoprotein</keyword>
<keyword id="KW-0379">Hydroxylation</keyword>
<keyword id="KW-0430">Lectin</keyword>
<keyword id="KW-0479">Metal-binding</keyword>
<keyword id="KW-1185">Reference proteome</keyword>
<keyword id="KW-0677">Repeat</keyword>
<keyword id="KW-0964">Secreted</keyword>
<keyword id="KW-0732">Signal</keyword>
<keyword id="KW-0767">Surface film</keyword>
<evidence type="ECO:0000250" key="1">
    <source>
        <dbReference type="UniProtKB" id="P35242"/>
    </source>
</evidence>
<evidence type="ECO:0000250" key="2">
    <source>
        <dbReference type="UniProtKB" id="Q8IWL2"/>
    </source>
</evidence>
<evidence type="ECO:0000255" key="3">
    <source>
        <dbReference type="PROSITE-ProRule" id="PRU00040"/>
    </source>
</evidence>
<evidence type="ECO:0000256" key="4">
    <source>
        <dbReference type="SAM" id="MobiDB-lite"/>
    </source>
</evidence>
<evidence type="ECO:0000269" key="5">
    <source>
    </source>
</evidence>
<evidence type="ECO:0000269" key="6">
    <source>
    </source>
</evidence>
<evidence type="ECO:0000305" key="7"/>
<evidence type="ECO:0007829" key="8">
    <source>
        <dbReference type="PDB" id="3PAR"/>
    </source>
</evidence>
<evidence type="ECO:0007829" key="9">
    <source>
        <dbReference type="PDB" id="3PBF"/>
    </source>
</evidence>
<evidence type="ECO:0007829" key="10">
    <source>
        <dbReference type="PDB" id="4WRC"/>
    </source>
</evidence>
<evidence type="ECO:0007829" key="11">
    <source>
        <dbReference type="PDB" id="4WRE"/>
    </source>
</evidence>
<comment type="function">
    <text evidence="1">In presence of calcium ions, it binds to surfactant phospholipids and contributes to lower the surface tension at the air-liquid interface in the alveoli of the mammalian lung and is essential for normal respiration. Enhances the expression of MYO18A/SP-R210 on alveolar macrophages.</text>
</comment>
<comment type="subunit">
    <text evidence="5">Oligomeric complex of 6 set of homotrimers.</text>
</comment>
<comment type="subcellular location">
    <subcellularLocation>
        <location evidence="2">Secreted</location>
    </subcellularLocation>
    <subcellularLocation>
        <location evidence="2">Secreted</location>
        <location evidence="2">Extracellular space</location>
        <location evidence="2">Extracellular matrix</location>
    </subcellularLocation>
    <subcellularLocation>
        <location evidence="2">Secreted</location>
        <location evidence="2">Extracellular space</location>
        <location evidence="2">Surface film</location>
    </subcellularLocation>
</comment>
<comment type="miscellaneous">
    <text>Pulmonary surfactant consists of 90% lipid and 10% protein. There are 4 surfactant-associated proteins: 2 collagenous, carbohydrate-binding glycoproteins (SP-A and SP-D) and 2 small hydrophobic proteins (SP-B and SP-C).</text>
</comment>
<comment type="similarity">
    <text evidence="7">Belongs to the SFTPA family.</text>
</comment>
<comment type="sequence caution" evidence="7">
    <conflict type="erroneous initiation">
        <sequence resource="EMBL-CDS" id="AAA41972"/>
    </conflict>
</comment>
<reference key="1">
    <citation type="journal article" date="1988" name="Biochim. Biophys. Acta">
        <title>Rat pulmonary surfactant protein A is expressed as two differently sized mRNA species which arise from differential polyadenylation of one transcript.</title>
        <authorList>
            <person name="Fisher J.H."/>
            <person name="Emrie P.A."/>
            <person name="Shannon J."/>
            <person name="Sano K."/>
            <person name="Hattler B."/>
            <person name="Mason R.J."/>
        </authorList>
    </citation>
    <scope>NUCLEOTIDE SEQUENCE [MRNA]</scope>
    <source>
        <tissue>Lung</tissue>
    </source>
</reference>
<reference key="2">
    <citation type="journal article" date="1987" name="Biochem. Biophys. Res. Commun.">
        <title>Isolation and sequence of a cDNA clone for the rat pulmonary surfactant-associated protein (PSP-A).</title>
        <authorList>
            <person name="Sano K."/>
            <person name="Fisher J.H."/>
            <person name="Mason R.J."/>
            <person name="Kuroki Y."/>
            <person name="Schilling J."/>
            <person name="Benson B."/>
            <person name="Voelker D."/>
        </authorList>
    </citation>
    <scope>NUCLEOTIDE SEQUENCE [MRNA]</scope>
    <scope>PARTIAL PROTEIN SEQUENCE</scope>
    <scope>HYDROXYLATION AT PRO-30; PRO-33; PRO-36; PRO-42; PRO-54; PRO-57; PRO-63; PRO-67; PRO-70 AND PRO-76</scope>
</reference>
<reference key="3">
    <citation type="journal article" date="1995" name="Am. J. Physiol.">
        <title>Sequence of rat surfactant protein A gene and functional mapping of its upstream region.</title>
        <authorList>
            <person name="Smith C.I."/>
            <person name="Rosenberg E."/>
            <person name="Reisher S.R."/>
            <person name="Li F."/>
            <person name="Kefalides P."/>
            <person name="Fisher A.B."/>
            <person name="Feinstein S.I."/>
        </authorList>
    </citation>
    <scope>NUCLEOTIDE SEQUENCE [GENOMIC DNA]</scope>
    <source>
        <strain>Sprague-Dawley</strain>
        <tissue>Lung</tissue>
    </source>
</reference>
<reference key="4">
    <citation type="journal article" date="2004" name="Genome Res.">
        <title>The status, quality, and expansion of the NIH full-length cDNA project: the Mammalian Gene Collection (MGC).</title>
        <authorList>
            <consortium name="The MGC Project Team"/>
        </authorList>
    </citation>
    <scope>NUCLEOTIDE SEQUENCE [LARGE SCALE MRNA]</scope>
    <source>
        <tissue>Lung</tissue>
    </source>
</reference>
<reference key="5">
    <citation type="journal article" date="2003" name="J. Biol. Chem.">
        <title>Crystal structure of trimeric carbohydrate recognition and neck domains of surfactant protein A.</title>
        <authorList>
            <person name="Head J.F."/>
            <person name="Mealy T.R."/>
            <person name="McCormack F.X."/>
            <person name="Seaton B.A."/>
        </authorList>
    </citation>
    <scope>X-RAY CRYSTALLOGRAPHY (2.1 ANGSTROMS) OF 101-248</scope>
    <scope>CALCIUM-BINDING SITES</scope>
    <scope>DISULFIDE BONDS</scope>
    <scope>SUBUNIT</scope>
</reference>
<dbReference type="EMBL" id="M33201">
    <property type="protein sequence ID" value="AAA41973.1"/>
    <property type="molecule type" value="mRNA"/>
</dbReference>
<dbReference type="EMBL" id="X13176">
    <property type="protein sequence ID" value="CAA31573.1"/>
    <property type="molecule type" value="mRNA"/>
</dbReference>
<dbReference type="EMBL" id="X13177">
    <property type="protein sequence ID" value="CAA31574.1"/>
    <property type="molecule type" value="mRNA"/>
</dbReference>
<dbReference type="EMBL" id="M15754">
    <property type="protein sequence ID" value="AAA41972.1"/>
    <property type="status" value="ALT_INIT"/>
    <property type="molecule type" value="mRNA"/>
</dbReference>
<dbReference type="EMBL" id="U43092">
    <property type="protein sequence ID" value="AAA85516.1"/>
    <property type="molecule type" value="Genomic_DNA"/>
</dbReference>
<dbReference type="EMBL" id="BC085353">
    <property type="protein sequence ID" value="AAH85353.1"/>
    <property type="molecule type" value="mRNA"/>
</dbReference>
<dbReference type="PIR" id="A29299">
    <property type="entry name" value="LNRTPS"/>
</dbReference>
<dbReference type="RefSeq" id="NP_001257574.1">
    <property type="nucleotide sequence ID" value="NM_001270645.1"/>
</dbReference>
<dbReference type="RefSeq" id="NP_001257576.1">
    <property type="nucleotide sequence ID" value="NM_001270647.1"/>
</dbReference>
<dbReference type="RefSeq" id="NP_059025.2">
    <property type="nucleotide sequence ID" value="NM_017329.2"/>
</dbReference>
<dbReference type="RefSeq" id="XP_038950127.1">
    <property type="nucleotide sequence ID" value="XM_039094199.1"/>
</dbReference>
<dbReference type="PDB" id="1R13">
    <property type="method" value="X-ray"/>
    <property type="resolution" value="2.10 A"/>
    <property type="chains" value="A=101-248"/>
</dbReference>
<dbReference type="PDB" id="1R14">
    <property type="method" value="X-ray"/>
    <property type="resolution" value="2.50 A"/>
    <property type="chains" value="A=101-248"/>
</dbReference>
<dbReference type="PDB" id="3PAK">
    <property type="method" value="X-ray"/>
    <property type="resolution" value="1.90 A"/>
    <property type="chains" value="A=101-248"/>
</dbReference>
<dbReference type="PDB" id="3PAQ">
    <property type="method" value="X-ray"/>
    <property type="resolution" value="2.10 A"/>
    <property type="chains" value="A=101-248"/>
</dbReference>
<dbReference type="PDB" id="3PAR">
    <property type="method" value="X-ray"/>
    <property type="resolution" value="2.30 A"/>
    <property type="chains" value="A=101-248"/>
</dbReference>
<dbReference type="PDB" id="3PBF">
    <property type="method" value="X-ray"/>
    <property type="resolution" value="1.80 A"/>
    <property type="chains" value="A=101-248"/>
</dbReference>
<dbReference type="PDB" id="4WR9">
    <property type="method" value="X-ray"/>
    <property type="resolution" value="2.30 A"/>
    <property type="chains" value="A=101-248"/>
</dbReference>
<dbReference type="PDB" id="4WRC">
    <property type="method" value="X-ray"/>
    <property type="resolution" value="1.80 A"/>
    <property type="chains" value="A=101-248"/>
</dbReference>
<dbReference type="PDB" id="4WRE">
    <property type="method" value="X-ray"/>
    <property type="resolution" value="1.75 A"/>
    <property type="chains" value="A=101-248"/>
</dbReference>
<dbReference type="PDB" id="4WRF">
    <property type="method" value="X-ray"/>
    <property type="resolution" value="1.90 A"/>
    <property type="chains" value="A=101-248"/>
</dbReference>
<dbReference type="PDB" id="4WUW">
    <property type="method" value="X-ray"/>
    <property type="resolution" value="2.40 A"/>
    <property type="chains" value="A=101-248"/>
</dbReference>
<dbReference type="PDB" id="4WUX">
    <property type="method" value="X-ray"/>
    <property type="resolution" value="1.90 A"/>
    <property type="chains" value="A=101-248"/>
</dbReference>
<dbReference type="PDB" id="5FFR">
    <property type="method" value="X-ray"/>
    <property type="resolution" value="2.20 A"/>
    <property type="chains" value="A=101-248"/>
</dbReference>
<dbReference type="PDB" id="5FFS">
    <property type="method" value="X-ray"/>
    <property type="resolution" value="1.80 A"/>
    <property type="chains" value="A=101-248"/>
</dbReference>
<dbReference type="PDB" id="5FFT">
    <property type="method" value="X-ray"/>
    <property type="resolution" value="2.20 A"/>
    <property type="chains" value="A=101-248"/>
</dbReference>
<dbReference type="PDBsum" id="1R13"/>
<dbReference type="PDBsum" id="1R14"/>
<dbReference type="PDBsum" id="3PAK"/>
<dbReference type="PDBsum" id="3PAQ"/>
<dbReference type="PDBsum" id="3PAR"/>
<dbReference type="PDBsum" id="3PBF"/>
<dbReference type="PDBsum" id="4WR9"/>
<dbReference type="PDBsum" id="4WRC"/>
<dbReference type="PDBsum" id="4WRE"/>
<dbReference type="PDBsum" id="4WRF"/>
<dbReference type="PDBsum" id="4WUW"/>
<dbReference type="PDBsum" id="4WUX"/>
<dbReference type="PDBsum" id="5FFR"/>
<dbReference type="PDBsum" id="5FFS"/>
<dbReference type="PDBsum" id="5FFT"/>
<dbReference type="SMR" id="P08427"/>
<dbReference type="BioGRID" id="246897">
    <property type="interactions" value="1"/>
</dbReference>
<dbReference type="FunCoup" id="P08427">
    <property type="interactions" value="146"/>
</dbReference>
<dbReference type="STRING" id="10116.ENSRNOP00000039850"/>
<dbReference type="UniLectin" id="P08427"/>
<dbReference type="GlyCosmos" id="P08427">
    <property type="glycosylation" value="1 site, No reported glycans"/>
</dbReference>
<dbReference type="GlyGen" id="P08427">
    <property type="glycosylation" value="2 sites"/>
</dbReference>
<dbReference type="PhosphoSitePlus" id="P08427"/>
<dbReference type="PaxDb" id="10116-ENSRNOP00000039850"/>
<dbReference type="ABCD" id="P08427">
    <property type="antibodies" value="21 sequenced antibodies"/>
</dbReference>
<dbReference type="Ensembl" id="ENSRNOT00000047870.5">
    <property type="protein sequence ID" value="ENSRNOP00000039850.3"/>
    <property type="gene ID" value="ENSRNOG00000011438.7"/>
</dbReference>
<dbReference type="GeneID" id="24773"/>
<dbReference type="KEGG" id="rno:24773"/>
<dbReference type="UCSC" id="RGD:3665">
    <property type="organism name" value="rat"/>
</dbReference>
<dbReference type="AGR" id="RGD:3665"/>
<dbReference type="CTD" id="653509"/>
<dbReference type="RGD" id="3665">
    <property type="gene designation" value="Sftpa1"/>
</dbReference>
<dbReference type="eggNOG" id="KOG4297">
    <property type="taxonomic scope" value="Eukaryota"/>
</dbReference>
<dbReference type="GeneTree" id="ENSGT00940000156653"/>
<dbReference type="HOGENOM" id="CLU_049894_3_0_1"/>
<dbReference type="InParanoid" id="P08427"/>
<dbReference type="OMA" id="VRKHNTY"/>
<dbReference type="OrthoDB" id="60415at9989"/>
<dbReference type="PhylomeDB" id="P08427"/>
<dbReference type="TreeFam" id="TF330481"/>
<dbReference type="Reactome" id="R-RNO-166016">
    <property type="pathway name" value="Toll Like Receptor 4 (TLR4) Cascade"/>
</dbReference>
<dbReference type="Reactome" id="R-RNO-391160">
    <property type="pathway name" value="Signal regulatory protein family interactions"/>
</dbReference>
<dbReference type="Reactome" id="R-RNO-5683826">
    <property type="pathway name" value="Surfactant metabolism"/>
</dbReference>
<dbReference type="Reactome" id="R-RNO-5686938">
    <property type="pathway name" value="Regulation of TLR by endogenous ligand"/>
</dbReference>
<dbReference type="EvolutionaryTrace" id="P08427"/>
<dbReference type="PRO" id="PR:P08427"/>
<dbReference type="Proteomes" id="UP000002494">
    <property type="component" value="Chromosome 16"/>
</dbReference>
<dbReference type="Bgee" id="ENSRNOG00000011438">
    <property type="expression patterns" value="Expressed in lung and 2 other cell types or tissues"/>
</dbReference>
<dbReference type="GO" id="GO:0005581">
    <property type="term" value="C:collagen trimer"/>
    <property type="evidence" value="ECO:0007669"/>
    <property type="project" value="UniProtKB-KW"/>
</dbReference>
<dbReference type="GO" id="GO:0005615">
    <property type="term" value="C:extracellular space"/>
    <property type="evidence" value="ECO:0000314"/>
    <property type="project" value="RGD"/>
</dbReference>
<dbReference type="GO" id="GO:0005771">
    <property type="term" value="C:multivesicular body"/>
    <property type="evidence" value="ECO:0000314"/>
    <property type="project" value="RGD"/>
</dbReference>
<dbReference type="GO" id="GO:0030246">
    <property type="term" value="F:carbohydrate binding"/>
    <property type="evidence" value="ECO:0007669"/>
    <property type="project" value="UniProtKB-KW"/>
</dbReference>
<dbReference type="GO" id="GO:0046872">
    <property type="term" value="F:metal ion binding"/>
    <property type="evidence" value="ECO:0007669"/>
    <property type="project" value="UniProtKB-KW"/>
</dbReference>
<dbReference type="GO" id="GO:0071260">
    <property type="term" value="P:cellular response to mechanical stimulus"/>
    <property type="evidence" value="ECO:0000270"/>
    <property type="project" value="RGD"/>
</dbReference>
<dbReference type="GO" id="GO:0071732">
    <property type="term" value="P:cellular response to nitric oxide"/>
    <property type="evidence" value="ECO:0000270"/>
    <property type="project" value="RGD"/>
</dbReference>
<dbReference type="GO" id="GO:0007623">
    <property type="term" value="P:circadian rhythm"/>
    <property type="evidence" value="ECO:0000270"/>
    <property type="project" value="RGD"/>
</dbReference>
<dbReference type="GO" id="GO:0008228">
    <property type="term" value="P:opsonization"/>
    <property type="evidence" value="ECO:0000266"/>
    <property type="project" value="RGD"/>
</dbReference>
<dbReference type="GO" id="GO:0050766">
    <property type="term" value="P:positive regulation of phagocytosis"/>
    <property type="evidence" value="ECO:0000314"/>
    <property type="project" value="RGD"/>
</dbReference>
<dbReference type="GO" id="GO:0007585">
    <property type="term" value="P:respiratory gaseous exchange by respiratory system"/>
    <property type="evidence" value="ECO:0007669"/>
    <property type="project" value="UniProtKB-KW"/>
</dbReference>
<dbReference type="GO" id="GO:0070849">
    <property type="term" value="P:response to epidermal growth factor"/>
    <property type="evidence" value="ECO:0000270"/>
    <property type="project" value="RGD"/>
</dbReference>
<dbReference type="GO" id="GO:0051384">
    <property type="term" value="P:response to glucocorticoid"/>
    <property type="evidence" value="ECO:0000270"/>
    <property type="project" value="RGD"/>
</dbReference>
<dbReference type="GO" id="GO:0009725">
    <property type="term" value="P:response to hormone"/>
    <property type="evidence" value="ECO:0000270"/>
    <property type="project" value="RGD"/>
</dbReference>
<dbReference type="GO" id="GO:0055093">
    <property type="term" value="P:response to hyperoxia"/>
    <property type="evidence" value="ECO:0000270"/>
    <property type="project" value="RGD"/>
</dbReference>
<dbReference type="GO" id="GO:0001666">
    <property type="term" value="P:response to hypoxia"/>
    <property type="evidence" value="ECO:0000270"/>
    <property type="project" value="RGD"/>
</dbReference>
<dbReference type="GO" id="GO:0070741">
    <property type="term" value="P:response to interleukin-6"/>
    <property type="evidence" value="ECO:0000270"/>
    <property type="project" value="RGD"/>
</dbReference>
<dbReference type="GO" id="GO:0032496">
    <property type="term" value="P:response to lipopolysaccharide"/>
    <property type="evidence" value="ECO:0000270"/>
    <property type="project" value="RGD"/>
</dbReference>
<dbReference type="GO" id="GO:0032526">
    <property type="term" value="P:response to retinoic acid"/>
    <property type="evidence" value="ECO:0000270"/>
    <property type="project" value="RGD"/>
</dbReference>
<dbReference type="GO" id="GO:0033189">
    <property type="term" value="P:response to vitamin A"/>
    <property type="evidence" value="ECO:0000270"/>
    <property type="project" value="RGD"/>
</dbReference>
<dbReference type="CDD" id="cd03591">
    <property type="entry name" value="CLECT_collectin_like"/>
    <property type="match status" value="1"/>
</dbReference>
<dbReference type="FunFam" id="3.10.100.10:FF:000056">
    <property type="entry name" value="Pulmonary surfactant-associated protein A"/>
    <property type="match status" value="1"/>
</dbReference>
<dbReference type="Gene3D" id="3.10.100.10">
    <property type="entry name" value="Mannose-Binding Protein A, subunit A"/>
    <property type="match status" value="1"/>
</dbReference>
<dbReference type="InterPro" id="IPR001304">
    <property type="entry name" value="C-type_lectin-like"/>
</dbReference>
<dbReference type="InterPro" id="IPR016186">
    <property type="entry name" value="C-type_lectin-like/link_sf"/>
</dbReference>
<dbReference type="InterPro" id="IPR018378">
    <property type="entry name" value="C-type_lectin_CS"/>
</dbReference>
<dbReference type="InterPro" id="IPR051077">
    <property type="entry name" value="Ca-dependent_lectin"/>
</dbReference>
<dbReference type="InterPro" id="IPR033990">
    <property type="entry name" value="Collectin_CTLD"/>
</dbReference>
<dbReference type="InterPro" id="IPR016187">
    <property type="entry name" value="CTDL_fold"/>
</dbReference>
<dbReference type="PANTHER" id="PTHR24024">
    <property type="entry name" value="PULMONARY SURFACTANT-ASSOCIATED PROTEIN A"/>
    <property type="match status" value="1"/>
</dbReference>
<dbReference type="PANTHER" id="PTHR24024:SF13">
    <property type="entry name" value="PULMONARY SURFACTANT-ASSOCIATED PROTEIN A1"/>
    <property type="match status" value="1"/>
</dbReference>
<dbReference type="Pfam" id="PF00059">
    <property type="entry name" value="Lectin_C"/>
    <property type="match status" value="1"/>
</dbReference>
<dbReference type="SMART" id="SM00034">
    <property type="entry name" value="CLECT"/>
    <property type="match status" value="1"/>
</dbReference>
<dbReference type="SUPFAM" id="SSF56436">
    <property type="entry name" value="C-type lectin-like"/>
    <property type="match status" value="1"/>
</dbReference>
<dbReference type="SUPFAM" id="SSF57944">
    <property type="entry name" value="Triple coiled coil domain of C-type lectins"/>
    <property type="match status" value="1"/>
</dbReference>
<dbReference type="PROSITE" id="PS00615">
    <property type="entry name" value="C_TYPE_LECTIN_1"/>
    <property type="match status" value="1"/>
</dbReference>
<dbReference type="PROSITE" id="PS50041">
    <property type="entry name" value="C_TYPE_LECTIN_2"/>
    <property type="match status" value="1"/>
</dbReference>
<organism>
    <name type="scientific">Rattus norvegicus</name>
    <name type="common">Rat</name>
    <dbReference type="NCBI Taxonomy" id="10116"/>
    <lineage>
        <taxon>Eukaryota</taxon>
        <taxon>Metazoa</taxon>
        <taxon>Chordata</taxon>
        <taxon>Craniata</taxon>
        <taxon>Vertebrata</taxon>
        <taxon>Euteleostomi</taxon>
        <taxon>Mammalia</taxon>
        <taxon>Eutheria</taxon>
        <taxon>Euarchontoglires</taxon>
        <taxon>Glires</taxon>
        <taxon>Rodentia</taxon>
        <taxon>Myomorpha</taxon>
        <taxon>Muroidea</taxon>
        <taxon>Muridae</taxon>
        <taxon>Murinae</taxon>
        <taxon>Rattus</taxon>
    </lineage>
</organism>
<name>SFTPA_RAT</name>